<comment type="function">
    <text evidence="1">Catalyzes the transfer of a phosphate group to glutamate to form L-glutamate 5-phosphate.</text>
</comment>
<comment type="catalytic activity">
    <reaction evidence="1">
        <text>L-glutamate + ATP = L-glutamyl 5-phosphate + ADP</text>
        <dbReference type="Rhea" id="RHEA:14877"/>
        <dbReference type="ChEBI" id="CHEBI:29985"/>
        <dbReference type="ChEBI" id="CHEBI:30616"/>
        <dbReference type="ChEBI" id="CHEBI:58274"/>
        <dbReference type="ChEBI" id="CHEBI:456216"/>
        <dbReference type="EC" id="2.7.2.11"/>
    </reaction>
</comment>
<comment type="pathway">
    <text evidence="1">Amino-acid biosynthesis; L-proline biosynthesis; L-glutamate 5-semialdehyde from L-glutamate: step 1/2.</text>
</comment>
<comment type="subcellular location">
    <subcellularLocation>
        <location evidence="1">Cytoplasm</location>
    </subcellularLocation>
</comment>
<comment type="similarity">
    <text evidence="1">Belongs to the glutamate 5-kinase family.</text>
</comment>
<reference key="1">
    <citation type="journal article" date="2001" name="Genome Res.">
        <title>The complete genome sequence of the lactic acid bacterium Lactococcus lactis ssp. lactis IL1403.</title>
        <authorList>
            <person name="Bolotin A."/>
            <person name="Wincker P."/>
            <person name="Mauger S."/>
            <person name="Jaillon O."/>
            <person name="Malarme K."/>
            <person name="Weissenbach J."/>
            <person name="Ehrlich S.D."/>
            <person name="Sorokin A."/>
        </authorList>
    </citation>
    <scope>NUCLEOTIDE SEQUENCE [LARGE SCALE GENOMIC DNA]</scope>
    <source>
        <strain>IL1403</strain>
    </source>
</reference>
<sequence>MIMTRKNILSVKRIVVKIGTSSLILPNGKINLSNIDELAFVLSDLNNKGYEVILVTSGAIGVGLNVLGIDKRPKGIADQQALASIGQVELMSLYTQMFRRYSQKVSQLLLTRDVTDFPTSRENAENALNALLGLGIIPIINENDAIAVDEMDHQTKFGDNDKLGAIVSKLVNADLLIMLSDIDGLFDKNPSIYDDAKIFNEIHEITDELRQMAGGAGSRFGTGGMTSKLAAAQILFENGQEMVLTNGERIREIKEIIEGREIGTYFHQKS</sequence>
<dbReference type="EC" id="2.7.2.11" evidence="1"/>
<dbReference type="EMBL" id="AE005176">
    <property type="protein sequence ID" value="AAK05707.1"/>
    <property type="molecule type" value="Genomic_DNA"/>
</dbReference>
<dbReference type="PIR" id="A86826">
    <property type="entry name" value="A86826"/>
</dbReference>
<dbReference type="RefSeq" id="NP_267765.1">
    <property type="nucleotide sequence ID" value="NC_002662.1"/>
</dbReference>
<dbReference type="SMR" id="Q9CF72"/>
<dbReference type="PaxDb" id="272623-L0117"/>
<dbReference type="EnsemblBacteria" id="AAK05707">
    <property type="protein sequence ID" value="AAK05707"/>
    <property type="gene ID" value="L0117"/>
</dbReference>
<dbReference type="KEGG" id="lla:L0117"/>
<dbReference type="PATRIC" id="fig|272623.7.peg.1730"/>
<dbReference type="eggNOG" id="COG0263">
    <property type="taxonomic scope" value="Bacteria"/>
</dbReference>
<dbReference type="HOGENOM" id="CLU_025400_0_2_9"/>
<dbReference type="OrthoDB" id="9804434at2"/>
<dbReference type="UniPathway" id="UPA00098">
    <property type="reaction ID" value="UER00359"/>
</dbReference>
<dbReference type="Proteomes" id="UP000002196">
    <property type="component" value="Chromosome"/>
</dbReference>
<dbReference type="GO" id="GO:0005829">
    <property type="term" value="C:cytosol"/>
    <property type="evidence" value="ECO:0007669"/>
    <property type="project" value="TreeGrafter"/>
</dbReference>
<dbReference type="GO" id="GO:0005524">
    <property type="term" value="F:ATP binding"/>
    <property type="evidence" value="ECO:0007669"/>
    <property type="project" value="UniProtKB-KW"/>
</dbReference>
<dbReference type="GO" id="GO:0004349">
    <property type="term" value="F:glutamate 5-kinase activity"/>
    <property type="evidence" value="ECO:0007669"/>
    <property type="project" value="UniProtKB-UniRule"/>
</dbReference>
<dbReference type="GO" id="GO:0055129">
    <property type="term" value="P:L-proline biosynthetic process"/>
    <property type="evidence" value="ECO:0007669"/>
    <property type="project" value="UniProtKB-UniRule"/>
</dbReference>
<dbReference type="CDD" id="cd04242">
    <property type="entry name" value="AAK_G5K_ProB"/>
    <property type="match status" value="1"/>
</dbReference>
<dbReference type="FunFam" id="3.40.1160.10:FF:000018">
    <property type="entry name" value="Glutamate 5-kinase"/>
    <property type="match status" value="1"/>
</dbReference>
<dbReference type="Gene3D" id="3.40.1160.10">
    <property type="entry name" value="Acetylglutamate kinase-like"/>
    <property type="match status" value="1"/>
</dbReference>
<dbReference type="HAMAP" id="MF_00456">
    <property type="entry name" value="ProB"/>
    <property type="match status" value="1"/>
</dbReference>
<dbReference type="InterPro" id="IPR036393">
    <property type="entry name" value="AceGlu_kinase-like_sf"/>
</dbReference>
<dbReference type="InterPro" id="IPR001048">
    <property type="entry name" value="Asp/Glu/Uridylate_kinase"/>
</dbReference>
<dbReference type="InterPro" id="IPR041739">
    <property type="entry name" value="G5K_ProB"/>
</dbReference>
<dbReference type="InterPro" id="IPR001057">
    <property type="entry name" value="Glu/AcGlu_kinase"/>
</dbReference>
<dbReference type="InterPro" id="IPR011529">
    <property type="entry name" value="Glu_5kinase"/>
</dbReference>
<dbReference type="InterPro" id="IPR005715">
    <property type="entry name" value="Glu_5kinase/COase_Synthase"/>
</dbReference>
<dbReference type="InterPro" id="IPR019797">
    <property type="entry name" value="Glutamate_5-kinase_CS"/>
</dbReference>
<dbReference type="NCBIfam" id="TIGR01027">
    <property type="entry name" value="proB"/>
    <property type="match status" value="1"/>
</dbReference>
<dbReference type="PANTHER" id="PTHR43654">
    <property type="entry name" value="GLUTAMATE 5-KINASE"/>
    <property type="match status" value="1"/>
</dbReference>
<dbReference type="PANTHER" id="PTHR43654:SF1">
    <property type="entry name" value="ISOPENTENYL PHOSPHATE KINASE"/>
    <property type="match status" value="1"/>
</dbReference>
<dbReference type="Pfam" id="PF00696">
    <property type="entry name" value="AA_kinase"/>
    <property type="match status" value="1"/>
</dbReference>
<dbReference type="PIRSF" id="PIRSF000729">
    <property type="entry name" value="GK"/>
    <property type="match status" value="1"/>
</dbReference>
<dbReference type="PRINTS" id="PR00474">
    <property type="entry name" value="GLU5KINASE"/>
</dbReference>
<dbReference type="SUPFAM" id="SSF53633">
    <property type="entry name" value="Carbamate kinase-like"/>
    <property type="match status" value="1"/>
</dbReference>
<dbReference type="PROSITE" id="PS00902">
    <property type="entry name" value="GLUTAMATE_5_KINASE"/>
    <property type="match status" value="1"/>
</dbReference>
<gene>
    <name evidence="1" type="primary">proB</name>
    <name type="ordered locus">LL1609</name>
    <name type="ORF">L0117</name>
</gene>
<organism>
    <name type="scientific">Lactococcus lactis subsp. lactis (strain IL1403)</name>
    <name type="common">Streptococcus lactis</name>
    <dbReference type="NCBI Taxonomy" id="272623"/>
    <lineage>
        <taxon>Bacteria</taxon>
        <taxon>Bacillati</taxon>
        <taxon>Bacillota</taxon>
        <taxon>Bacilli</taxon>
        <taxon>Lactobacillales</taxon>
        <taxon>Streptococcaceae</taxon>
        <taxon>Lactococcus</taxon>
    </lineage>
</organism>
<accession>Q9CF72</accession>
<protein>
    <recommendedName>
        <fullName evidence="1">Glutamate 5-kinase</fullName>
        <ecNumber evidence="1">2.7.2.11</ecNumber>
    </recommendedName>
    <alternativeName>
        <fullName evidence="1">Gamma-glutamyl kinase</fullName>
        <shortName evidence="1">GK</shortName>
    </alternativeName>
</protein>
<keyword id="KW-0028">Amino-acid biosynthesis</keyword>
<keyword id="KW-0067">ATP-binding</keyword>
<keyword id="KW-0963">Cytoplasm</keyword>
<keyword id="KW-0418">Kinase</keyword>
<keyword id="KW-0547">Nucleotide-binding</keyword>
<keyword id="KW-0641">Proline biosynthesis</keyword>
<keyword id="KW-1185">Reference proteome</keyword>
<keyword id="KW-0808">Transferase</keyword>
<evidence type="ECO:0000255" key="1">
    <source>
        <dbReference type="HAMAP-Rule" id="MF_00456"/>
    </source>
</evidence>
<proteinExistence type="inferred from homology"/>
<feature type="chain" id="PRO_0000109682" description="Glutamate 5-kinase">
    <location>
        <begin position="1"/>
        <end position="270"/>
    </location>
</feature>
<feature type="binding site" evidence="1">
    <location>
        <position position="17"/>
    </location>
    <ligand>
        <name>ATP</name>
        <dbReference type="ChEBI" id="CHEBI:30616"/>
    </ligand>
</feature>
<feature type="binding site" evidence="1">
    <location>
        <position position="57"/>
    </location>
    <ligand>
        <name>substrate</name>
    </ligand>
</feature>
<feature type="binding site" evidence="1">
    <location>
        <position position="144"/>
    </location>
    <ligand>
        <name>substrate</name>
    </ligand>
</feature>
<feature type="binding site" evidence="1">
    <location>
        <position position="160"/>
    </location>
    <ligand>
        <name>substrate</name>
    </ligand>
</feature>
<feature type="binding site" evidence="1">
    <location>
        <begin position="180"/>
        <end position="181"/>
    </location>
    <ligand>
        <name>ATP</name>
        <dbReference type="ChEBI" id="CHEBI:30616"/>
    </ligand>
</feature>
<feature type="binding site" evidence="1">
    <location>
        <begin position="222"/>
        <end position="228"/>
    </location>
    <ligand>
        <name>ATP</name>
        <dbReference type="ChEBI" id="CHEBI:30616"/>
    </ligand>
</feature>
<name>PROB_LACLA</name>